<reference key="1">
    <citation type="submission" date="2006-08" db="EMBL/GenBank/DDBJ databases">
        <title>Complete sequence of chromosome 2 of Burkholderia cenocepacia HI2424.</title>
        <authorList>
            <person name="Copeland A."/>
            <person name="Lucas S."/>
            <person name="Lapidus A."/>
            <person name="Barry K."/>
            <person name="Detter J.C."/>
            <person name="Glavina del Rio T."/>
            <person name="Hammon N."/>
            <person name="Israni S."/>
            <person name="Pitluck S."/>
            <person name="Chain P."/>
            <person name="Malfatti S."/>
            <person name="Shin M."/>
            <person name="Vergez L."/>
            <person name="Schmutz J."/>
            <person name="Larimer F."/>
            <person name="Land M."/>
            <person name="Hauser L."/>
            <person name="Kyrpides N."/>
            <person name="Kim E."/>
            <person name="LiPuma J.J."/>
            <person name="Gonzalez C.F."/>
            <person name="Konstantinidis K."/>
            <person name="Tiedje J.M."/>
            <person name="Richardson P."/>
        </authorList>
    </citation>
    <scope>NUCLEOTIDE SEQUENCE [LARGE SCALE GENOMIC DNA]</scope>
    <source>
        <strain>HI2424</strain>
    </source>
</reference>
<accession>A0AYZ0</accession>
<sequence>MRARLISYNGTTMYDLLKTIDDPADLRRLDRRQLQPLADELRAFVLDSVSKTGGHLSSNLGTVELTIALHYVFNTPNDRIVWDVGHQTYPHKILTGRRDQMHSLRQYDGISGFPRRSESEYDTFGTAHSSTSISAALGMAIGSQLNGDDRFSIAVIGDGAMTAGMAFEAMNNAGVSEDAKLLVILNDNDMSISPPVGALNRHLARLMSGRFYAAARAGVERVLSVAPPVLELARKLEEHAKGMVVPATLFEEFGFNYIGPIDGHDLDSLIPTLQNIRELRGPQFLHVVTKKGQGYKLAEADPVLYHGPGKFNPAEGIKPSTTPAKKTYTQVFGEWLCDEAERDTRVVGITPAMREGSGMVEFEKRFKDRYYDVGIAEQHAVTFAGGLATEGLKPVVAIYSTFLQRAYDQLIHDVALQNLPVVFAIDRAGLVGADGATHAGAYDLAFMRCIPNMTIMAASDENECRQMLHTALQQPNPTAVRYPRGAGTGVATVKEFTEIPLGKGEVRRRTSQPEGKRVAILAFGTMVAPSLAAAEELDATVANMRFVKPVDAALVRELAETHDYLVTVEEGCVMGGAGSACVEALMESGVIRPVLQLGLPDQFVDHGDHAKLLAQCGLDGAGIAKSIRERFLSPAADVAGHAKRVA</sequence>
<comment type="function">
    <text evidence="1">Catalyzes the acyloin condensation reaction between C atoms 2 and 3 of pyruvate and glyceraldehyde 3-phosphate to yield 1-deoxy-D-xylulose-5-phosphate (DXP).</text>
</comment>
<comment type="catalytic activity">
    <reaction evidence="1">
        <text>D-glyceraldehyde 3-phosphate + pyruvate + H(+) = 1-deoxy-D-xylulose 5-phosphate + CO2</text>
        <dbReference type="Rhea" id="RHEA:12605"/>
        <dbReference type="ChEBI" id="CHEBI:15361"/>
        <dbReference type="ChEBI" id="CHEBI:15378"/>
        <dbReference type="ChEBI" id="CHEBI:16526"/>
        <dbReference type="ChEBI" id="CHEBI:57792"/>
        <dbReference type="ChEBI" id="CHEBI:59776"/>
        <dbReference type="EC" id="2.2.1.7"/>
    </reaction>
</comment>
<comment type="cofactor">
    <cofactor evidence="1">
        <name>Mg(2+)</name>
        <dbReference type="ChEBI" id="CHEBI:18420"/>
    </cofactor>
    <text evidence="1">Binds 1 Mg(2+) ion per subunit.</text>
</comment>
<comment type="cofactor">
    <cofactor evidence="1">
        <name>thiamine diphosphate</name>
        <dbReference type="ChEBI" id="CHEBI:58937"/>
    </cofactor>
    <text evidence="1">Binds 1 thiamine pyrophosphate per subunit.</text>
</comment>
<comment type="pathway">
    <text evidence="1">Metabolic intermediate biosynthesis; 1-deoxy-D-xylulose 5-phosphate biosynthesis; 1-deoxy-D-xylulose 5-phosphate from D-glyceraldehyde 3-phosphate and pyruvate: step 1/1.</text>
</comment>
<comment type="subunit">
    <text evidence="1">Homodimer.</text>
</comment>
<comment type="similarity">
    <text evidence="1">Belongs to the transketolase family. DXPS subfamily.</text>
</comment>
<feature type="chain" id="PRO_1000071994" description="1-deoxy-D-xylulose-5-phosphate synthase">
    <location>
        <begin position="1"/>
        <end position="646"/>
    </location>
</feature>
<feature type="binding site" evidence="1">
    <location>
        <position position="86"/>
    </location>
    <ligand>
        <name>thiamine diphosphate</name>
        <dbReference type="ChEBI" id="CHEBI:58937"/>
    </ligand>
</feature>
<feature type="binding site" evidence="1">
    <location>
        <begin position="127"/>
        <end position="129"/>
    </location>
    <ligand>
        <name>thiamine diphosphate</name>
        <dbReference type="ChEBI" id="CHEBI:58937"/>
    </ligand>
</feature>
<feature type="binding site" evidence="1">
    <location>
        <position position="158"/>
    </location>
    <ligand>
        <name>Mg(2+)</name>
        <dbReference type="ChEBI" id="CHEBI:18420"/>
    </ligand>
</feature>
<feature type="binding site" evidence="1">
    <location>
        <begin position="159"/>
        <end position="160"/>
    </location>
    <ligand>
        <name>thiamine diphosphate</name>
        <dbReference type="ChEBI" id="CHEBI:58937"/>
    </ligand>
</feature>
<feature type="binding site" evidence="1">
    <location>
        <position position="188"/>
    </location>
    <ligand>
        <name>Mg(2+)</name>
        <dbReference type="ChEBI" id="CHEBI:18420"/>
    </ligand>
</feature>
<feature type="binding site" evidence="1">
    <location>
        <position position="188"/>
    </location>
    <ligand>
        <name>thiamine diphosphate</name>
        <dbReference type="ChEBI" id="CHEBI:58937"/>
    </ligand>
</feature>
<feature type="binding site" evidence="1">
    <location>
        <position position="295"/>
    </location>
    <ligand>
        <name>thiamine diphosphate</name>
        <dbReference type="ChEBI" id="CHEBI:58937"/>
    </ligand>
</feature>
<feature type="binding site" evidence="1">
    <location>
        <position position="377"/>
    </location>
    <ligand>
        <name>thiamine diphosphate</name>
        <dbReference type="ChEBI" id="CHEBI:58937"/>
    </ligand>
</feature>
<proteinExistence type="inferred from homology"/>
<name>DXS_BURCH</name>
<evidence type="ECO:0000255" key="1">
    <source>
        <dbReference type="HAMAP-Rule" id="MF_00315"/>
    </source>
</evidence>
<protein>
    <recommendedName>
        <fullName evidence="1">1-deoxy-D-xylulose-5-phosphate synthase</fullName>
        <ecNumber evidence="1">2.2.1.7</ecNumber>
    </recommendedName>
    <alternativeName>
        <fullName evidence="1">1-deoxyxylulose-5-phosphate synthase</fullName>
        <shortName evidence="1">DXP synthase</shortName>
        <shortName evidence="1">DXPS</shortName>
    </alternativeName>
</protein>
<gene>
    <name evidence="1" type="primary">dxs</name>
    <name type="ordered locus">Bcen2424_3879</name>
</gene>
<organism>
    <name type="scientific">Burkholderia cenocepacia (strain HI2424)</name>
    <dbReference type="NCBI Taxonomy" id="331272"/>
    <lineage>
        <taxon>Bacteria</taxon>
        <taxon>Pseudomonadati</taxon>
        <taxon>Pseudomonadota</taxon>
        <taxon>Betaproteobacteria</taxon>
        <taxon>Burkholderiales</taxon>
        <taxon>Burkholderiaceae</taxon>
        <taxon>Burkholderia</taxon>
        <taxon>Burkholderia cepacia complex</taxon>
    </lineage>
</organism>
<keyword id="KW-0414">Isoprene biosynthesis</keyword>
<keyword id="KW-0460">Magnesium</keyword>
<keyword id="KW-0479">Metal-binding</keyword>
<keyword id="KW-0784">Thiamine biosynthesis</keyword>
<keyword id="KW-0786">Thiamine pyrophosphate</keyword>
<keyword id="KW-0808">Transferase</keyword>
<dbReference type="EC" id="2.2.1.7" evidence="1"/>
<dbReference type="EMBL" id="CP000459">
    <property type="protein sequence ID" value="ABK10616.1"/>
    <property type="molecule type" value="Genomic_DNA"/>
</dbReference>
<dbReference type="SMR" id="A0AYZ0"/>
<dbReference type="KEGG" id="bch:Bcen2424_3879"/>
<dbReference type="HOGENOM" id="CLU_009227_1_4_4"/>
<dbReference type="UniPathway" id="UPA00064">
    <property type="reaction ID" value="UER00091"/>
</dbReference>
<dbReference type="GO" id="GO:0005829">
    <property type="term" value="C:cytosol"/>
    <property type="evidence" value="ECO:0007669"/>
    <property type="project" value="TreeGrafter"/>
</dbReference>
<dbReference type="GO" id="GO:0008661">
    <property type="term" value="F:1-deoxy-D-xylulose-5-phosphate synthase activity"/>
    <property type="evidence" value="ECO:0007669"/>
    <property type="project" value="UniProtKB-UniRule"/>
</dbReference>
<dbReference type="GO" id="GO:0000287">
    <property type="term" value="F:magnesium ion binding"/>
    <property type="evidence" value="ECO:0007669"/>
    <property type="project" value="UniProtKB-UniRule"/>
</dbReference>
<dbReference type="GO" id="GO:0030976">
    <property type="term" value="F:thiamine pyrophosphate binding"/>
    <property type="evidence" value="ECO:0007669"/>
    <property type="project" value="UniProtKB-UniRule"/>
</dbReference>
<dbReference type="GO" id="GO:0052865">
    <property type="term" value="P:1-deoxy-D-xylulose 5-phosphate biosynthetic process"/>
    <property type="evidence" value="ECO:0007669"/>
    <property type="project" value="UniProtKB-UniPathway"/>
</dbReference>
<dbReference type="GO" id="GO:0019288">
    <property type="term" value="P:isopentenyl diphosphate biosynthetic process, methylerythritol 4-phosphate pathway"/>
    <property type="evidence" value="ECO:0007669"/>
    <property type="project" value="TreeGrafter"/>
</dbReference>
<dbReference type="GO" id="GO:0016114">
    <property type="term" value="P:terpenoid biosynthetic process"/>
    <property type="evidence" value="ECO:0007669"/>
    <property type="project" value="UniProtKB-UniRule"/>
</dbReference>
<dbReference type="GO" id="GO:0009228">
    <property type="term" value="P:thiamine biosynthetic process"/>
    <property type="evidence" value="ECO:0007669"/>
    <property type="project" value="UniProtKB-UniRule"/>
</dbReference>
<dbReference type="CDD" id="cd02007">
    <property type="entry name" value="TPP_DXS"/>
    <property type="match status" value="1"/>
</dbReference>
<dbReference type="CDD" id="cd07033">
    <property type="entry name" value="TPP_PYR_DXS_TK_like"/>
    <property type="match status" value="1"/>
</dbReference>
<dbReference type="FunFam" id="3.40.50.920:FF:000002">
    <property type="entry name" value="1-deoxy-D-xylulose-5-phosphate synthase"/>
    <property type="match status" value="1"/>
</dbReference>
<dbReference type="FunFam" id="3.40.50.970:FF:000005">
    <property type="entry name" value="1-deoxy-D-xylulose-5-phosphate synthase"/>
    <property type="match status" value="1"/>
</dbReference>
<dbReference type="Gene3D" id="3.40.50.920">
    <property type="match status" value="1"/>
</dbReference>
<dbReference type="Gene3D" id="3.40.50.970">
    <property type="match status" value="2"/>
</dbReference>
<dbReference type="HAMAP" id="MF_00315">
    <property type="entry name" value="DXP_synth"/>
    <property type="match status" value="1"/>
</dbReference>
<dbReference type="InterPro" id="IPR005477">
    <property type="entry name" value="Dxylulose-5-P_synthase"/>
</dbReference>
<dbReference type="InterPro" id="IPR029061">
    <property type="entry name" value="THDP-binding"/>
</dbReference>
<dbReference type="InterPro" id="IPR009014">
    <property type="entry name" value="Transketo_C/PFOR_II"/>
</dbReference>
<dbReference type="InterPro" id="IPR005475">
    <property type="entry name" value="Transketolase-like_Pyr-bd"/>
</dbReference>
<dbReference type="InterPro" id="IPR020826">
    <property type="entry name" value="Transketolase_BS"/>
</dbReference>
<dbReference type="InterPro" id="IPR033248">
    <property type="entry name" value="Transketolase_C"/>
</dbReference>
<dbReference type="InterPro" id="IPR049557">
    <property type="entry name" value="Transketolase_CS"/>
</dbReference>
<dbReference type="NCBIfam" id="TIGR00204">
    <property type="entry name" value="dxs"/>
    <property type="match status" value="1"/>
</dbReference>
<dbReference type="NCBIfam" id="NF003933">
    <property type="entry name" value="PRK05444.2-2"/>
    <property type="match status" value="1"/>
</dbReference>
<dbReference type="PANTHER" id="PTHR43322">
    <property type="entry name" value="1-D-DEOXYXYLULOSE 5-PHOSPHATE SYNTHASE-RELATED"/>
    <property type="match status" value="1"/>
</dbReference>
<dbReference type="PANTHER" id="PTHR43322:SF5">
    <property type="entry name" value="1-DEOXY-D-XYLULOSE-5-PHOSPHATE SYNTHASE, CHLOROPLASTIC"/>
    <property type="match status" value="1"/>
</dbReference>
<dbReference type="Pfam" id="PF13292">
    <property type="entry name" value="DXP_synthase_N"/>
    <property type="match status" value="1"/>
</dbReference>
<dbReference type="Pfam" id="PF02779">
    <property type="entry name" value="Transket_pyr"/>
    <property type="match status" value="1"/>
</dbReference>
<dbReference type="Pfam" id="PF02780">
    <property type="entry name" value="Transketolase_C"/>
    <property type="match status" value="1"/>
</dbReference>
<dbReference type="SMART" id="SM00861">
    <property type="entry name" value="Transket_pyr"/>
    <property type="match status" value="1"/>
</dbReference>
<dbReference type="SUPFAM" id="SSF52518">
    <property type="entry name" value="Thiamin diphosphate-binding fold (THDP-binding)"/>
    <property type="match status" value="2"/>
</dbReference>
<dbReference type="SUPFAM" id="SSF52922">
    <property type="entry name" value="TK C-terminal domain-like"/>
    <property type="match status" value="1"/>
</dbReference>
<dbReference type="PROSITE" id="PS00801">
    <property type="entry name" value="TRANSKETOLASE_1"/>
    <property type="match status" value="1"/>
</dbReference>
<dbReference type="PROSITE" id="PS00802">
    <property type="entry name" value="TRANSKETOLASE_2"/>
    <property type="match status" value="1"/>
</dbReference>